<evidence type="ECO:0000255" key="1">
    <source>
        <dbReference type="HAMAP-Rule" id="MF_00263"/>
    </source>
</evidence>
<comment type="similarity">
    <text evidence="1">Belongs to the UPF0127 family.</text>
</comment>
<keyword id="KW-1185">Reference proteome</keyword>
<reference key="1">
    <citation type="journal article" date="2009" name="Appl. Environ. Microbiol.">
        <title>Metabolic versatility and indigenous origin of the archaeon Thermococcus sibiricus, isolated from a siberian oil reservoir, as revealed by genome analysis.</title>
        <authorList>
            <person name="Mardanov A.V."/>
            <person name="Ravin N.V."/>
            <person name="Svetlitchnyi V.A."/>
            <person name="Beletsky A.V."/>
            <person name="Miroshnichenko M.L."/>
            <person name="Bonch-Osmolovskaya E.A."/>
            <person name="Skryabin K.G."/>
        </authorList>
    </citation>
    <scope>NUCLEOTIDE SEQUENCE [LARGE SCALE GENOMIC DNA]</scope>
    <source>
        <strain>DSM 12597 / MM 739</strain>
    </source>
</reference>
<accession>C6A4G9</accession>
<sequence>MLINKTKGKVWTGRVKIADTFFKRFRGLMLTPNVNYALVFILPSETRLNASIHMFFMLQSIDVIFLDSSREVVDLKRARPWRFYVPKGGAKYIIETPVGVIDYLNAEIGDEIDWEVEEERSAIPSPVEALNKIGIKNSNGTISLAEPKPKLKGE</sequence>
<gene>
    <name type="ordered locus">TSIB_1463</name>
</gene>
<dbReference type="EMBL" id="CP001463">
    <property type="protein sequence ID" value="ACS90514.1"/>
    <property type="molecule type" value="Genomic_DNA"/>
</dbReference>
<dbReference type="RefSeq" id="WP_015849731.1">
    <property type="nucleotide sequence ID" value="NC_012883.1"/>
</dbReference>
<dbReference type="SMR" id="C6A4G9"/>
<dbReference type="STRING" id="604354.TSIB_1463"/>
<dbReference type="GeneID" id="8096468"/>
<dbReference type="KEGG" id="tsi:TSIB_1463"/>
<dbReference type="eggNOG" id="arCOG03113">
    <property type="taxonomic scope" value="Archaea"/>
</dbReference>
<dbReference type="HOGENOM" id="CLU_097039_4_2_2"/>
<dbReference type="OrthoDB" id="64208at2157"/>
<dbReference type="Proteomes" id="UP000009079">
    <property type="component" value="Chromosome"/>
</dbReference>
<dbReference type="Gene3D" id="2.60.120.1140">
    <property type="entry name" value="Protein of unknown function DUF192"/>
    <property type="match status" value="1"/>
</dbReference>
<dbReference type="HAMAP" id="MF_00263">
    <property type="entry name" value="UPF0127"/>
    <property type="match status" value="1"/>
</dbReference>
<dbReference type="InterPro" id="IPR003795">
    <property type="entry name" value="DUF192"/>
</dbReference>
<dbReference type="InterPro" id="IPR038695">
    <property type="entry name" value="Saro_0823-like_sf"/>
</dbReference>
<dbReference type="InterPro" id="IPR022906">
    <property type="entry name" value="UPF0127"/>
</dbReference>
<dbReference type="NCBIfam" id="NF002996">
    <property type="entry name" value="PRK03760.1"/>
    <property type="match status" value="1"/>
</dbReference>
<dbReference type="PANTHER" id="PTHR37953">
    <property type="entry name" value="UPF0127 PROTEIN MJ1496"/>
    <property type="match status" value="1"/>
</dbReference>
<dbReference type="PANTHER" id="PTHR37953:SF1">
    <property type="entry name" value="UPF0127 PROTEIN MJ1496"/>
    <property type="match status" value="1"/>
</dbReference>
<dbReference type="Pfam" id="PF02643">
    <property type="entry name" value="DUF192"/>
    <property type="match status" value="1"/>
</dbReference>
<proteinExistence type="inferred from homology"/>
<name>Y1463_THESM</name>
<feature type="chain" id="PRO_1000204689" description="UPF0127 protein TSIB_1463">
    <location>
        <begin position="1"/>
        <end position="154"/>
    </location>
</feature>
<protein>
    <recommendedName>
        <fullName evidence="1">UPF0127 protein TSIB_1463</fullName>
    </recommendedName>
</protein>
<organism>
    <name type="scientific">Thermococcus sibiricus (strain DSM 12597 / MM 739)</name>
    <dbReference type="NCBI Taxonomy" id="604354"/>
    <lineage>
        <taxon>Archaea</taxon>
        <taxon>Methanobacteriati</taxon>
        <taxon>Methanobacteriota</taxon>
        <taxon>Thermococci</taxon>
        <taxon>Thermococcales</taxon>
        <taxon>Thermococcaceae</taxon>
        <taxon>Thermococcus</taxon>
    </lineage>
</organism>